<accession>A7GK11</accession>
<comment type="function">
    <text evidence="1">Forms part of the ribosomal stalk which helps the ribosome interact with GTP-bound translation factors. Is thus essential for accurate translation.</text>
</comment>
<comment type="subunit">
    <text evidence="1">Homodimer. Part of the ribosomal stalk of the 50S ribosomal subunit. Forms a multimeric L10(L12)X complex, where L10 forms an elongated spine to which 2 to 4 L12 dimers bind in a sequential fashion. Binds GTP-bound translation factors.</text>
</comment>
<comment type="similarity">
    <text evidence="1">Belongs to the bacterial ribosomal protein bL12 family.</text>
</comment>
<gene>
    <name evidence="1" type="primary">rplL</name>
    <name type="ordered locus">Bcer98_0094</name>
</gene>
<name>RL7_BACCN</name>
<dbReference type="EMBL" id="CP000764">
    <property type="protein sequence ID" value="ABS20469.1"/>
    <property type="molecule type" value="Genomic_DNA"/>
</dbReference>
<dbReference type="RefSeq" id="WP_011983237.1">
    <property type="nucleotide sequence ID" value="NC_009674.1"/>
</dbReference>
<dbReference type="SMR" id="A7GK11"/>
<dbReference type="STRING" id="315749.Bcer98_0094"/>
<dbReference type="GeneID" id="33895415"/>
<dbReference type="KEGG" id="bcy:Bcer98_0094"/>
<dbReference type="eggNOG" id="COG0222">
    <property type="taxonomic scope" value="Bacteria"/>
</dbReference>
<dbReference type="HOGENOM" id="CLU_086499_3_2_9"/>
<dbReference type="OrthoDB" id="9811748at2"/>
<dbReference type="Proteomes" id="UP000002300">
    <property type="component" value="Chromosome"/>
</dbReference>
<dbReference type="GO" id="GO:0022625">
    <property type="term" value="C:cytosolic large ribosomal subunit"/>
    <property type="evidence" value="ECO:0007669"/>
    <property type="project" value="TreeGrafter"/>
</dbReference>
<dbReference type="GO" id="GO:0003729">
    <property type="term" value="F:mRNA binding"/>
    <property type="evidence" value="ECO:0007669"/>
    <property type="project" value="TreeGrafter"/>
</dbReference>
<dbReference type="GO" id="GO:0003735">
    <property type="term" value="F:structural constituent of ribosome"/>
    <property type="evidence" value="ECO:0007669"/>
    <property type="project" value="InterPro"/>
</dbReference>
<dbReference type="GO" id="GO:0006412">
    <property type="term" value="P:translation"/>
    <property type="evidence" value="ECO:0007669"/>
    <property type="project" value="UniProtKB-UniRule"/>
</dbReference>
<dbReference type="CDD" id="cd00387">
    <property type="entry name" value="Ribosomal_L7_L12"/>
    <property type="match status" value="1"/>
</dbReference>
<dbReference type="FunFam" id="1.20.5.710:FF:000002">
    <property type="entry name" value="50S ribosomal protein L7/L12"/>
    <property type="match status" value="1"/>
</dbReference>
<dbReference type="FunFam" id="3.30.1390.10:FF:000001">
    <property type="entry name" value="50S ribosomal protein L7/L12"/>
    <property type="match status" value="1"/>
</dbReference>
<dbReference type="Gene3D" id="3.30.1390.10">
    <property type="match status" value="1"/>
</dbReference>
<dbReference type="Gene3D" id="1.20.5.710">
    <property type="entry name" value="Single helix bin"/>
    <property type="match status" value="1"/>
</dbReference>
<dbReference type="HAMAP" id="MF_00368">
    <property type="entry name" value="Ribosomal_bL12"/>
    <property type="match status" value="1"/>
</dbReference>
<dbReference type="InterPro" id="IPR000206">
    <property type="entry name" value="Ribosomal_bL12"/>
</dbReference>
<dbReference type="InterPro" id="IPR013823">
    <property type="entry name" value="Ribosomal_bL12_C"/>
</dbReference>
<dbReference type="InterPro" id="IPR014719">
    <property type="entry name" value="Ribosomal_bL12_C/ClpS-like"/>
</dbReference>
<dbReference type="InterPro" id="IPR008932">
    <property type="entry name" value="Ribosomal_bL12_oligo"/>
</dbReference>
<dbReference type="InterPro" id="IPR036235">
    <property type="entry name" value="Ribosomal_bL12_oligo_N_sf"/>
</dbReference>
<dbReference type="NCBIfam" id="TIGR00855">
    <property type="entry name" value="L12"/>
    <property type="match status" value="1"/>
</dbReference>
<dbReference type="PANTHER" id="PTHR45987">
    <property type="entry name" value="39S RIBOSOMAL PROTEIN L12"/>
    <property type="match status" value="1"/>
</dbReference>
<dbReference type="PANTHER" id="PTHR45987:SF4">
    <property type="entry name" value="LARGE RIBOSOMAL SUBUNIT PROTEIN BL12M"/>
    <property type="match status" value="1"/>
</dbReference>
<dbReference type="Pfam" id="PF00542">
    <property type="entry name" value="Ribosomal_L12"/>
    <property type="match status" value="1"/>
</dbReference>
<dbReference type="Pfam" id="PF16320">
    <property type="entry name" value="Ribosomal_L12_N"/>
    <property type="match status" value="1"/>
</dbReference>
<dbReference type="SUPFAM" id="SSF54736">
    <property type="entry name" value="ClpS-like"/>
    <property type="match status" value="1"/>
</dbReference>
<dbReference type="SUPFAM" id="SSF48300">
    <property type="entry name" value="Ribosomal protein L7/12, oligomerisation (N-terminal) domain"/>
    <property type="match status" value="1"/>
</dbReference>
<feature type="chain" id="PRO_1000079780" description="Large ribosomal subunit protein bL12">
    <location>
        <begin position="1"/>
        <end position="119"/>
    </location>
</feature>
<organism>
    <name type="scientific">Bacillus cytotoxicus (strain DSM 22905 / CIP 110041 / 391-98 / NVH 391-98)</name>
    <dbReference type="NCBI Taxonomy" id="315749"/>
    <lineage>
        <taxon>Bacteria</taxon>
        <taxon>Bacillati</taxon>
        <taxon>Bacillota</taxon>
        <taxon>Bacilli</taxon>
        <taxon>Bacillales</taxon>
        <taxon>Bacillaceae</taxon>
        <taxon>Bacillus</taxon>
        <taxon>Bacillus cereus group</taxon>
    </lineage>
</organism>
<proteinExistence type="inferred from homology"/>
<reference key="1">
    <citation type="journal article" date="2008" name="Chem. Biol. Interact.">
        <title>Extending the Bacillus cereus group genomics to putative food-borne pathogens of different toxicity.</title>
        <authorList>
            <person name="Lapidus A."/>
            <person name="Goltsman E."/>
            <person name="Auger S."/>
            <person name="Galleron N."/>
            <person name="Segurens B."/>
            <person name="Dossat C."/>
            <person name="Land M.L."/>
            <person name="Broussolle V."/>
            <person name="Brillard J."/>
            <person name="Guinebretiere M.-H."/>
            <person name="Sanchis V."/>
            <person name="Nguen-the C."/>
            <person name="Lereclus D."/>
            <person name="Richardson P."/>
            <person name="Wincker P."/>
            <person name="Weissenbach J."/>
            <person name="Ehrlich S.D."/>
            <person name="Sorokin A."/>
        </authorList>
    </citation>
    <scope>NUCLEOTIDE SEQUENCE [LARGE SCALE GENOMIC DNA]</scope>
    <source>
        <strain>DSM 22905 / CIP 110041 / 391-98 / NVH 391-98</strain>
    </source>
</reference>
<sequence length="119" mass="12544">MTKEQIIEAVKSMTVLELNDLVKAIEEEFGVTAAAPVAVVGGAGEAAAEKTEFDVELANAGAQKIKVIKVVREITGLGLKEAKELVDNTPKVIKEGASKEEAEEIKAKLEEVGAAVEVK</sequence>
<keyword id="KW-0687">Ribonucleoprotein</keyword>
<keyword id="KW-0689">Ribosomal protein</keyword>
<evidence type="ECO:0000255" key="1">
    <source>
        <dbReference type="HAMAP-Rule" id="MF_00368"/>
    </source>
</evidence>
<evidence type="ECO:0000305" key="2"/>
<protein>
    <recommendedName>
        <fullName evidence="1">Large ribosomal subunit protein bL12</fullName>
    </recommendedName>
    <alternativeName>
        <fullName evidence="2">50S ribosomal protein L7/L12</fullName>
    </alternativeName>
</protein>